<proteinExistence type="inferred from homology"/>
<dbReference type="EMBL" id="AF040100">
    <property type="protein sequence ID" value="AAD08790.1"/>
    <property type="molecule type" value="Genomic_DNA"/>
</dbReference>
<dbReference type="SMR" id="Q9ZI45"/>
<dbReference type="GO" id="GO:0022625">
    <property type="term" value="C:cytosolic large ribosomal subunit"/>
    <property type="evidence" value="ECO:0007669"/>
    <property type="project" value="TreeGrafter"/>
</dbReference>
<dbReference type="GO" id="GO:0019843">
    <property type="term" value="F:rRNA binding"/>
    <property type="evidence" value="ECO:0007669"/>
    <property type="project" value="UniProtKB-UniRule"/>
</dbReference>
<dbReference type="GO" id="GO:0003735">
    <property type="term" value="F:structural constituent of ribosome"/>
    <property type="evidence" value="ECO:0007669"/>
    <property type="project" value="InterPro"/>
</dbReference>
<dbReference type="GO" id="GO:0006412">
    <property type="term" value="P:translation"/>
    <property type="evidence" value="ECO:0007669"/>
    <property type="project" value="UniProtKB-UniRule"/>
</dbReference>
<dbReference type="CDD" id="cd00336">
    <property type="entry name" value="Ribosomal_L22"/>
    <property type="match status" value="1"/>
</dbReference>
<dbReference type="FunFam" id="3.90.470.10:FF:000011">
    <property type="entry name" value="50S ribosomal protein L22"/>
    <property type="match status" value="1"/>
</dbReference>
<dbReference type="Gene3D" id="3.90.470.10">
    <property type="entry name" value="Ribosomal protein L22/L17"/>
    <property type="match status" value="1"/>
</dbReference>
<dbReference type="HAMAP" id="MF_01331_B">
    <property type="entry name" value="Ribosomal_uL22_B"/>
    <property type="match status" value="1"/>
</dbReference>
<dbReference type="InterPro" id="IPR001063">
    <property type="entry name" value="Ribosomal_uL22"/>
</dbReference>
<dbReference type="InterPro" id="IPR005727">
    <property type="entry name" value="Ribosomal_uL22_bac/chlpt-type"/>
</dbReference>
<dbReference type="InterPro" id="IPR047867">
    <property type="entry name" value="Ribosomal_uL22_bac/org-type"/>
</dbReference>
<dbReference type="InterPro" id="IPR018260">
    <property type="entry name" value="Ribosomal_uL22_CS"/>
</dbReference>
<dbReference type="InterPro" id="IPR036394">
    <property type="entry name" value="Ribosomal_uL22_sf"/>
</dbReference>
<dbReference type="NCBIfam" id="TIGR01044">
    <property type="entry name" value="rplV_bact"/>
    <property type="match status" value="1"/>
</dbReference>
<dbReference type="PANTHER" id="PTHR13501">
    <property type="entry name" value="CHLOROPLAST 50S RIBOSOMAL PROTEIN L22-RELATED"/>
    <property type="match status" value="1"/>
</dbReference>
<dbReference type="PANTHER" id="PTHR13501:SF8">
    <property type="entry name" value="LARGE RIBOSOMAL SUBUNIT PROTEIN UL22M"/>
    <property type="match status" value="1"/>
</dbReference>
<dbReference type="Pfam" id="PF00237">
    <property type="entry name" value="Ribosomal_L22"/>
    <property type="match status" value="1"/>
</dbReference>
<dbReference type="SUPFAM" id="SSF54843">
    <property type="entry name" value="Ribosomal protein L22"/>
    <property type="match status" value="1"/>
</dbReference>
<dbReference type="PROSITE" id="PS00464">
    <property type="entry name" value="RIBOSOMAL_L22"/>
    <property type="match status" value="1"/>
</dbReference>
<evidence type="ECO:0000255" key="1">
    <source>
        <dbReference type="HAMAP-Rule" id="MF_01331"/>
    </source>
</evidence>
<evidence type="ECO:0000305" key="2"/>
<accession>Q9ZI45</accession>
<gene>
    <name evidence="1" type="primary">rplV</name>
    <name evidence="1" type="synonym">rpl22</name>
</gene>
<feature type="chain" id="PRO_0000125111" description="Large ribosomal subunit protein uL22">
    <location>
        <begin position="1"/>
        <end position="133"/>
    </location>
</feature>
<reference key="1">
    <citation type="journal article" date="2000" name="J. Mol. Evol.">
        <title>Phylogenetic depth of the bacterial genera Aquifex and Thermotoga inferred from analysis of ribosomal protein, elongation factor, and RNA polymerase subunit sequences.</title>
        <authorList>
            <person name="Bocchetta M."/>
            <person name="Gribaldo S."/>
            <person name="Sanangelantoni A.M."/>
            <person name="Cammarano P."/>
        </authorList>
    </citation>
    <scope>NUCLEOTIDE SEQUENCE [GENOMIC DNA]</scope>
    <source>
        <strain>DSM 6858 / JCM 9492 / Kol5A</strain>
    </source>
</reference>
<sequence>MGQLKIKDKSQREGYKPNQAIAILRYAHISPLKARLVLREIHGKDVGEALYLLKVIPKRAARIAEKLLKSAIANAEQKGLDLDRLYIKKAVADRGPILKKWIPRAHGRATMVRKRLSHITIVLEEKPEGKEEE</sequence>
<keyword id="KW-0687">Ribonucleoprotein</keyword>
<keyword id="KW-0689">Ribosomal protein</keyword>
<keyword id="KW-0694">RNA-binding</keyword>
<keyword id="KW-0699">rRNA-binding</keyword>
<protein>
    <recommendedName>
        <fullName evidence="1">Large ribosomal subunit protein uL22</fullName>
    </recommendedName>
    <alternativeName>
        <fullName evidence="2">50S ribosomal protein L22</fullName>
    </alternativeName>
</protein>
<organism>
    <name type="scientific">Aquifex pyrophilus</name>
    <dbReference type="NCBI Taxonomy" id="2714"/>
    <lineage>
        <taxon>Bacteria</taxon>
        <taxon>Pseudomonadati</taxon>
        <taxon>Aquificota</taxon>
        <taxon>Aquificia</taxon>
        <taxon>Aquificales</taxon>
        <taxon>Aquificaceae</taxon>
        <taxon>Aquifex</taxon>
    </lineage>
</organism>
<comment type="function">
    <text evidence="1">This protein binds specifically to 23S rRNA; its binding is stimulated by other ribosomal proteins, e.g. L4, L17, and L20. It is important during the early stages of 50S assembly. It makes multiple contacts with different domains of the 23S rRNA in the assembled 50S subunit and ribosome (By similarity).</text>
</comment>
<comment type="function">
    <text evidence="1">The globular domain of the protein is located near the polypeptide exit tunnel on the outside of the subunit, while an extended beta-hairpin is found that lines the wall of the exit tunnel in the center of the 70S ribosome.</text>
</comment>
<comment type="subunit">
    <text evidence="1">Part of the 50S ribosomal subunit.</text>
</comment>
<comment type="similarity">
    <text evidence="1">Belongs to the universal ribosomal protein uL22 family.</text>
</comment>
<name>RL22_AQUPY</name>